<comment type="function">
    <text evidence="1">Component of the cytochrome b6-f complex, which mediates electron transfer between photosystem II (PSII) and photosystem I (PSI), cyclic electron flow around PSI, and state transitions.</text>
</comment>
<comment type="subunit">
    <text evidence="1">The 4 large subunits of the cytochrome b6-f complex are cytochrome b6, subunit IV (17 kDa polypeptide, PetD), cytochrome f and the Rieske protein, while the 4 small subunits are PetG, PetL, PetM and PetN. The complex functions as a dimer (By similarity).</text>
</comment>
<comment type="subcellular location">
    <subcellularLocation>
        <location evidence="1">Cellular thylakoid membrane</location>
        <topology evidence="1">Single-pass membrane protein</topology>
    </subcellularLocation>
</comment>
<comment type="similarity">
    <text evidence="3">Belongs to the PetN family.</text>
</comment>
<keyword id="KW-0002">3D-structure</keyword>
<keyword id="KW-0249">Electron transport</keyword>
<keyword id="KW-0472">Membrane</keyword>
<keyword id="KW-0602">Photosynthesis</keyword>
<keyword id="KW-1185">Reference proteome</keyword>
<keyword id="KW-0793">Thylakoid</keyword>
<keyword id="KW-0812">Transmembrane</keyword>
<keyword id="KW-1133">Transmembrane helix</keyword>
<keyword id="KW-0813">Transport</keyword>
<protein>
    <recommendedName>
        <fullName>Cytochrome b6-f complex subunit 8</fullName>
    </recommendedName>
    <alternativeName>
        <fullName>Cytochrome b6-f complex subunit PetN</fullName>
    </alternativeName>
    <alternativeName>
        <fullName>Cytochrome b6-f complex subunit VIII</fullName>
    </alternativeName>
</protein>
<reference key="1">
    <citation type="submission" date="2001-05" db="EMBL/GenBank/DDBJ databases">
        <title>b6f complex of Anabaena sp.</title>
        <authorList>
            <person name="Arnold M."/>
        </authorList>
    </citation>
    <scope>NUCLEOTIDE SEQUENCE [GENOMIC DNA]</scope>
</reference>
<reference key="2">
    <citation type="journal article" date="2001" name="DNA Res.">
        <title>Complete genomic sequence of the filamentous nitrogen-fixing cyanobacterium Anabaena sp. strain PCC 7120.</title>
        <authorList>
            <person name="Kaneko T."/>
            <person name="Nakamura Y."/>
            <person name="Wolk C.P."/>
            <person name="Kuritz T."/>
            <person name="Sasamoto S."/>
            <person name="Watanabe A."/>
            <person name="Iriguchi M."/>
            <person name="Ishikawa A."/>
            <person name="Kawashima K."/>
            <person name="Kimura T."/>
            <person name="Kishida Y."/>
            <person name="Kohara M."/>
            <person name="Matsumoto M."/>
            <person name="Matsuno A."/>
            <person name="Muraki A."/>
            <person name="Nakazaki N."/>
            <person name="Shimpo S."/>
            <person name="Sugimoto M."/>
            <person name="Takazawa M."/>
            <person name="Yamada M."/>
            <person name="Yasuda M."/>
            <person name="Tabata S."/>
        </authorList>
    </citation>
    <scope>NUCLEOTIDE SEQUENCE [LARGE SCALE GENOMIC DNA]</scope>
    <source>
        <strain>PCC 7120 / SAG 25.82 / UTEX 2576</strain>
    </source>
</reference>
<name>PETN_NOSS1</name>
<accession>P61048</accession>
<accession>Q9L3P6</accession>
<evidence type="ECO:0000250" key="1"/>
<evidence type="ECO:0000255" key="2"/>
<evidence type="ECO:0000305" key="3"/>
<evidence type="ECO:0007829" key="4">
    <source>
        <dbReference type="PDB" id="4OGQ"/>
    </source>
</evidence>
<sequence length="29" mass="3234">MAILTLGWVSLLVVFTWSIAMVVWGRNGL</sequence>
<dbReference type="EMBL" id="AJ319652">
    <property type="protein sequence ID" value="CAC39612.1"/>
    <property type="molecule type" value="Genomic_DNA"/>
</dbReference>
<dbReference type="EMBL" id="BA000019">
    <property type="protein sequence ID" value="BAB75962.1"/>
    <property type="molecule type" value="Genomic_DNA"/>
</dbReference>
<dbReference type="PIR" id="AH2338">
    <property type="entry name" value="AH2338"/>
</dbReference>
<dbReference type="RefSeq" id="WP_010998401.1">
    <property type="nucleotide sequence ID" value="NZ_RSCN01000010.1"/>
</dbReference>
<dbReference type="PDB" id="2ZT9">
    <property type="method" value="X-ray"/>
    <property type="resolution" value="3.00 A"/>
    <property type="chains" value="H=1-29"/>
</dbReference>
<dbReference type="PDB" id="4H44">
    <property type="method" value="X-ray"/>
    <property type="resolution" value="2.70 A"/>
    <property type="chains" value="H=1-29"/>
</dbReference>
<dbReference type="PDB" id="4OGQ">
    <property type="method" value="X-ray"/>
    <property type="resolution" value="2.50 A"/>
    <property type="chains" value="H=1-29"/>
</dbReference>
<dbReference type="PDBsum" id="2ZT9"/>
<dbReference type="PDBsum" id="4H44"/>
<dbReference type="PDBsum" id="4OGQ"/>
<dbReference type="SMR" id="P61048"/>
<dbReference type="DIP" id="DIP-61007N"/>
<dbReference type="IntAct" id="P61048">
    <property type="interactions" value="1"/>
</dbReference>
<dbReference type="STRING" id="103690.gene:10496312"/>
<dbReference type="TCDB" id="3.D.3.5.6">
    <property type="family name" value="the proton-translocating quinol:cytochrome c reductase (qcr) superfamily"/>
</dbReference>
<dbReference type="GeneID" id="83685328"/>
<dbReference type="KEGG" id="ana:asl4263"/>
<dbReference type="EvolutionaryTrace" id="P61048"/>
<dbReference type="Proteomes" id="UP000002483">
    <property type="component" value="Chromosome"/>
</dbReference>
<dbReference type="GO" id="GO:0009512">
    <property type="term" value="C:cytochrome b6f complex"/>
    <property type="evidence" value="ECO:0007669"/>
    <property type="project" value="InterPro"/>
</dbReference>
<dbReference type="GO" id="GO:0031676">
    <property type="term" value="C:plasma membrane-derived thylakoid membrane"/>
    <property type="evidence" value="ECO:0007669"/>
    <property type="project" value="UniProtKB-SubCell"/>
</dbReference>
<dbReference type="GO" id="GO:0045158">
    <property type="term" value="F:electron transporter, transferring electrons within cytochrome b6/f complex of photosystem II activity"/>
    <property type="evidence" value="ECO:0007669"/>
    <property type="project" value="InterPro"/>
</dbReference>
<dbReference type="GO" id="GO:0017004">
    <property type="term" value="P:cytochrome complex assembly"/>
    <property type="evidence" value="ECO:0007669"/>
    <property type="project" value="UniProtKB-UniRule"/>
</dbReference>
<dbReference type="GO" id="GO:0015979">
    <property type="term" value="P:photosynthesis"/>
    <property type="evidence" value="ECO:0007669"/>
    <property type="project" value="UniProtKB-KW"/>
</dbReference>
<dbReference type="HAMAP" id="MF_00395">
    <property type="entry name" value="Cytb6_f_PetN"/>
    <property type="match status" value="1"/>
</dbReference>
<dbReference type="InterPro" id="IPR036143">
    <property type="entry name" value="Cytochr_b6-f_cplx_su8_sf"/>
</dbReference>
<dbReference type="InterPro" id="IPR005497">
    <property type="entry name" value="Cytochrome_b6-f_cplx_su8"/>
</dbReference>
<dbReference type="NCBIfam" id="NF011331">
    <property type="entry name" value="PRK14747.1"/>
    <property type="match status" value="1"/>
</dbReference>
<dbReference type="Pfam" id="PF03742">
    <property type="entry name" value="PetN"/>
    <property type="match status" value="1"/>
</dbReference>
<dbReference type="SUPFAM" id="SSF103451">
    <property type="entry name" value="PetN subunit of the cytochrome b6f complex"/>
    <property type="match status" value="1"/>
</dbReference>
<feature type="chain" id="PRO_0000217134" description="Cytochrome b6-f complex subunit 8">
    <location>
        <begin position="1"/>
        <end position="29"/>
    </location>
</feature>
<feature type="transmembrane region" description="Helical" evidence="2">
    <location>
        <begin position="3"/>
        <end position="23"/>
    </location>
</feature>
<feature type="helix" evidence="4">
    <location>
        <begin position="2"/>
        <end position="25"/>
    </location>
</feature>
<organism>
    <name type="scientific">Nostoc sp. (strain PCC 7120 / SAG 25.82 / UTEX 2576)</name>
    <dbReference type="NCBI Taxonomy" id="103690"/>
    <lineage>
        <taxon>Bacteria</taxon>
        <taxon>Bacillati</taxon>
        <taxon>Cyanobacteriota</taxon>
        <taxon>Cyanophyceae</taxon>
        <taxon>Nostocales</taxon>
        <taxon>Nostocaceae</taxon>
        <taxon>Nostoc</taxon>
    </lineage>
</organism>
<proteinExistence type="evidence at protein level"/>
<gene>
    <name type="primary">petN</name>
    <name type="ordered locus">asl4263</name>
</gene>